<keyword id="KW-0413">Isomerase</keyword>
<feature type="chain" id="PRO_1000016927" description="Ribose-5-phosphate isomerase A">
    <location>
        <begin position="1"/>
        <end position="219"/>
    </location>
</feature>
<feature type="active site" description="Proton acceptor" evidence="1">
    <location>
        <position position="103"/>
    </location>
</feature>
<feature type="binding site" evidence="1">
    <location>
        <begin position="28"/>
        <end position="31"/>
    </location>
    <ligand>
        <name>substrate</name>
    </ligand>
</feature>
<feature type="binding site" evidence="1">
    <location>
        <begin position="81"/>
        <end position="84"/>
    </location>
    <ligand>
        <name>substrate</name>
    </ligand>
</feature>
<feature type="binding site" evidence="1">
    <location>
        <begin position="94"/>
        <end position="97"/>
    </location>
    <ligand>
        <name>substrate</name>
    </ligand>
</feature>
<feature type="binding site" evidence="1">
    <location>
        <position position="121"/>
    </location>
    <ligand>
        <name>substrate</name>
    </ligand>
</feature>
<organism>
    <name type="scientific">Haemophilus influenzae (strain 86-028NP)</name>
    <dbReference type="NCBI Taxonomy" id="281310"/>
    <lineage>
        <taxon>Bacteria</taxon>
        <taxon>Pseudomonadati</taxon>
        <taxon>Pseudomonadota</taxon>
        <taxon>Gammaproteobacteria</taxon>
        <taxon>Pasteurellales</taxon>
        <taxon>Pasteurellaceae</taxon>
        <taxon>Haemophilus</taxon>
    </lineage>
</organism>
<sequence length="219" mass="23081">MNQLEMKKLAAQAALEYVTADTIVGVGSGSTVNCFIEALGTIKNKIQGVVAASKASEELLRKQGIEVFNANDVSSLDIYVDGADEINPQKMMIKGGGAALTREKIVAALAKKFICIVDSSKQVDVLGSTFPLPVEVIPMARSQVGRKLVALGGAPEYREGVVTDNGNVILDVHNFSILNPVEMEKELNNVAGVVTNGIFALRGADVVIVGTPEGAKIID</sequence>
<reference key="1">
    <citation type="journal article" date="2005" name="J. Bacteriol.">
        <title>Genomic sequence of an otitis media isolate of nontypeable Haemophilus influenzae: comparative study with H. influenzae serotype d, strain KW20.</title>
        <authorList>
            <person name="Harrison A."/>
            <person name="Dyer D.W."/>
            <person name="Gillaspy A."/>
            <person name="Ray W.C."/>
            <person name="Mungur R."/>
            <person name="Carson M.B."/>
            <person name="Zhong H."/>
            <person name="Gipson J."/>
            <person name="Gipson M."/>
            <person name="Johnson L.S."/>
            <person name="Lewis L."/>
            <person name="Bakaletz L.O."/>
            <person name="Munson R.S. Jr."/>
        </authorList>
    </citation>
    <scope>NUCLEOTIDE SEQUENCE [LARGE SCALE GENOMIC DNA]</scope>
    <source>
        <strain>86-028NP</strain>
    </source>
</reference>
<evidence type="ECO:0000255" key="1">
    <source>
        <dbReference type="HAMAP-Rule" id="MF_00170"/>
    </source>
</evidence>
<name>RPIA_HAEI8</name>
<comment type="function">
    <text evidence="1">Catalyzes the reversible conversion of ribose-5-phosphate to ribulose 5-phosphate.</text>
</comment>
<comment type="catalytic activity">
    <reaction evidence="1">
        <text>aldehydo-D-ribose 5-phosphate = D-ribulose 5-phosphate</text>
        <dbReference type="Rhea" id="RHEA:14657"/>
        <dbReference type="ChEBI" id="CHEBI:58121"/>
        <dbReference type="ChEBI" id="CHEBI:58273"/>
        <dbReference type="EC" id="5.3.1.6"/>
    </reaction>
</comment>
<comment type="pathway">
    <text evidence="1">Carbohydrate degradation; pentose phosphate pathway; D-ribose 5-phosphate from D-ribulose 5-phosphate (non-oxidative stage): step 1/1.</text>
</comment>
<comment type="subunit">
    <text evidence="1">Homodimer.</text>
</comment>
<comment type="similarity">
    <text evidence="1">Belongs to the ribose 5-phosphate isomerase family.</text>
</comment>
<protein>
    <recommendedName>
        <fullName evidence="1">Ribose-5-phosphate isomerase A</fullName>
        <ecNumber evidence="1">5.3.1.6</ecNumber>
    </recommendedName>
    <alternativeName>
        <fullName evidence="1">Phosphoriboisomerase A</fullName>
        <shortName evidence="1">PRI</shortName>
    </alternativeName>
</protein>
<proteinExistence type="inferred from homology"/>
<dbReference type="EC" id="5.3.1.6" evidence="1"/>
<dbReference type="EMBL" id="CP000057">
    <property type="protein sequence ID" value="AAX87518.1"/>
    <property type="molecule type" value="Genomic_DNA"/>
</dbReference>
<dbReference type="RefSeq" id="WP_011272072.1">
    <property type="nucleotide sequence ID" value="NC_007146.2"/>
</dbReference>
<dbReference type="SMR" id="Q4QN79"/>
<dbReference type="KEGG" id="hit:NTHI0595"/>
<dbReference type="HOGENOM" id="CLU_056590_1_1_6"/>
<dbReference type="UniPathway" id="UPA00115">
    <property type="reaction ID" value="UER00412"/>
</dbReference>
<dbReference type="Proteomes" id="UP000002525">
    <property type="component" value="Chromosome"/>
</dbReference>
<dbReference type="GO" id="GO:0005829">
    <property type="term" value="C:cytosol"/>
    <property type="evidence" value="ECO:0007669"/>
    <property type="project" value="TreeGrafter"/>
</dbReference>
<dbReference type="GO" id="GO:0004751">
    <property type="term" value="F:ribose-5-phosphate isomerase activity"/>
    <property type="evidence" value="ECO:0007669"/>
    <property type="project" value="UniProtKB-UniRule"/>
</dbReference>
<dbReference type="GO" id="GO:0006014">
    <property type="term" value="P:D-ribose metabolic process"/>
    <property type="evidence" value="ECO:0007669"/>
    <property type="project" value="TreeGrafter"/>
</dbReference>
<dbReference type="GO" id="GO:0009052">
    <property type="term" value="P:pentose-phosphate shunt, non-oxidative branch"/>
    <property type="evidence" value="ECO:0007669"/>
    <property type="project" value="UniProtKB-UniRule"/>
</dbReference>
<dbReference type="CDD" id="cd01398">
    <property type="entry name" value="RPI_A"/>
    <property type="match status" value="1"/>
</dbReference>
<dbReference type="FunFam" id="3.30.70.260:FF:000004">
    <property type="entry name" value="Ribose-5-phosphate isomerase A"/>
    <property type="match status" value="1"/>
</dbReference>
<dbReference type="FunFam" id="3.40.50.1360:FF:000001">
    <property type="entry name" value="Ribose-5-phosphate isomerase A"/>
    <property type="match status" value="1"/>
</dbReference>
<dbReference type="Gene3D" id="3.30.70.260">
    <property type="match status" value="1"/>
</dbReference>
<dbReference type="Gene3D" id="3.40.50.1360">
    <property type="match status" value="1"/>
</dbReference>
<dbReference type="HAMAP" id="MF_00170">
    <property type="entry name" value="Rib_5P_isom_A"/>
    <property type="match status" value="1"/>
</dbReference>
<dbReference type="InterPro" id="IPR037171">
    <property type="entry name" value="NagB/RpiA_transferase-like"/>
</dbReference>
<dbReference type="InterPro" id="IPR020672">
    <property type="entry name" value="Ribose5P_isomerase_typA_subgr"/>
</dbReference>
<dbReference type="InterPro" id="IPR004788">
    <property type="entry name" value="Ribose5P_isomerase_type_A"/>
</dbReference>
<dbReference type="NCBIfam" id="NF001924">
    <property type="entry name" value="PRK00702.1"/>
    <property type="match status" value="1"/>
</dbReference>
<dbReference type="NCBIfam" id="TIGR00021">
    <property type="entry name" value="rpiA"/>
    <property type="match status" value="1"/>
</dbReference>
<dbReference type="PANTHER" id="PTHR11934">
    <property type="entry name" value="RIBOSE-5-PHOSPHATE ISOMERASE"/>
    <property type="match status" value="1"/>
</dbReference>
<dbReference type="PANTHER" id="PTHR11934:SF0">
    <property type="entry name" value="RIBOSE-5-PHOSPHATE ISOMERASE"/>
    <property type="match status" value="1"/>
</dbReference>
<dbReference type="Pfam" id="PF06026">
    <property type="entry name" value="Rib_5-P_isom_A"/>
    <property type="match status" value="1"/>
</dbReference>
<dbReference type="SUPFAM" id="SSF75445">
    <property type="entry name" value="D-ribose-5-phosphate isomerase (RpiA), lid domain"/>
    <property type="match status" value="1"/>
</dbReference>
<dbReference type="SUPFAM" id="SSF100950">
    <property type="entry name" value="NagB/RpiA/CoA transferase-like"/>
    <property type="match status" value="1"/>
</dbReference>
<gene>
    <name evidence="1" type="primary">rpiA</name>
    <name type="ordered locus">NTHI0595</name>
</gene>
<accession>Q4QN79</accession>